<comment type="function">
    <text evidence="1 2">Involved in the biosynthesis of aklavinone which is an important precursor common to the formation of the clinically significant anthracyclines such as carminomycin, daunorubicin (daunomycin), rhodomycin, aclacinomycin T (aklavin) and aclacinomycin A (aclarubicin). These compounds are aromatic polyketide antibiotics that exhibit high cytotoxicity and are widely applied in the chemotherapy of a variety of cancers. Catalyzes the cyclization of aklanonic acid methyl ester to yield aklaviketone. It is also able to use nogalonic acid methyl ester as substrate, but produces exclusively auraviketone with C9-R stereochemistry.</text>
</comment>
<comment type="catalytic activity">
    <reaction>
        <text>methyl aklanonate = aklaviketone</text>
        <dbReference type="Rhea" id="RHEA:37879"/>
        <dbReference type="ChEBI" id="CHEBI:77988"/>
        <dbReference type="ChEBI" id="CHEBI:77994"/>
        <dbReference type="EC" id="5.5.1.23"/>
    </reaction>
</comment>
<comment type="biophysicochemical properties">
    <kinetics>
        <KM evidence="2">2 uM for nogalonic acid methyl ester</KM>
        <text>kcat is 1 sec(-1) for cyclization with nogalonic acid methyl ester.</text>
    </kinetics>
    <phDependence>
        <text evidence="2">Optimum pH is 7.2.</text>
    </phDependence>
</comment>
<comment type="pathway">
    <text>Antibiotic biosynthesis; daunorubicin biosynthesis.</text>
</comment>
<comment type="pathway">
    <text>Antibiotic biosynthesis; carminomycin biosynthesis.</text>
</comment>
<comment type="pathway">
    <text>Antibiotic biosynthesis; rhodomycin biosynthesis.</text>
</comment>
<comment type="pathway">
    <text>Antibiotic biosynthesis; aclacinomycin biosynthesis.</text>
</comment>
<comment type="subunit">
    <text evidence="2">Homotetramer.</text>
</comment>
<comment type="similarity">
    <text evidence="3">Belongs to the polyketide cyclase DnrD family.</text>
</comment>
<dbReference type="EC" id="5.5.1.23"/>
<dbReference type="EMBL" id="AF043550">
    <property type="protein sequence ID" value="AAB99853.1"/>
    <property type="molecule type" value="Genomic_DNA"/>
</dbReference>
<dbReference type="EMBL" id="AF257324">
    <property type="protein sequence ID" value="AAF70112.1"/>
    <property type="molecule type" value="Genomic_DNA"/>
</dbReference>
<dbReference type="EMBL" id="AB008466">
    <property type="protein sequence ID" value="BAB72051.1"/>
    <property type="molecule type" value="Genomic_DNA"/>
</dbReference>
<dbReference type="PDB" id="2F98">
    <property type="method" value="X-ray"/>
    <property type="resolution" value="2.10 A"/>
    <property type="chains" value="A/B/C/D=2-144"/>
</dbReference>
<dbReference type="PDB" id="2F99">
    <property type="method" value="X-ray"/>
    <property type="resolution" value="1.90 A"/>
    <property type="chains" value="A/B/C/D=2-144"/>
</dbReference>
<dbReference type="PDBsum" id="2F98"/>
<dbReference type="PDBsum" id="2F99"/>
<dbReference type="SMR" id="O52646"/>
<dbReference type="DrugBank" id="DB04624">
    <property type="generic name" value="DERIVATIVE OF AKLANONIC ACID METHYL ESTER (AAME)"/>
</dbReference>
<dbReference type="KEGG" id="ag:AAF70112"/>
<dbReference type="BioCyc" id="MetaCyc:MONOMER-18179"/>
<dbReference type="BRENDA" id="5.5.1.23">
    <property type="organism ID" value="13206"/>
</dbReference>
<dbReference type="BRENDA" id="5.5.1.B6">
    <property type="organism ID" value="13206"/>
</dbReference>
<dbReference type="UniPathway" id="UPA00054"/>
<dbReference type="UniPathway" id="UPA01040"/>
<dbReference type="UniPathway" id="UPA01042"/>
<dbReference type="UniPathway" id="UPA01043"/>
<dbReference type="EvolutionaryTrace" id="O52646"/>
<dbReference type="GO" id="GO:0016872">
    <property type="term" value="F:intramolecular lyase activity"/>
    <property type="evidence" value="ECO:0000314"/>
    <property type="project" value="UniProtKB"/>
</dbReference>
<dbReference type="GO" id="GO:0017000">
    <property type="term" value="P:antibiotic biosynthetic process"/>
    <property type="evidence" value="ECO:0000314"/>
    <property type="project" value="UniProtKB"/>
</dbReference>
<dbReference type="GO" id="GO:1901771">
    <property type="term" value="P:daunorubicin biosynthetic process"/>
    <property type="evidence" value="ECO:0000314"/>
    <property type="project" value="UniProtKB"/>
</dbReference>
<dbReference type="GO" id="GO:0044598">
    <property type="term" value="P:doxorubicin metabolic process"/>
    <property type="evidence" value="ECO:0000314"/>
    <property type="project" value="UniProtKB"/>
</dbReference>
<dbReference type="FunFam" id="3.10.450.50:FF:000047">
    <property type="entry name" value="Aklanonic acid methyl ester cyclase AcmA"/>
    <property type="match status" value="1"/>
</dbReference>
<dbReference type="Gene3D" id="3.10.450.50">
    <property type="match status" value="1"/>
</dbReference>
<dbReference type="InterPro" id="IPR009959">
    <property type="entry name" value="Cyclase_SnoaL-like"/>
</dbReference>
<dbReference type="InterPro" id="IPR032710">
    <property type="entry name" value="NTF2-like_dom_sf"/>
</dbReference>
<dbReference type="NCBIfam" id="NF033407">
    <property type="entry name" value="SnoaL_meth_ester"/>
    <property type="match status" value="1"/>
</dbReference>
<dbReference type="PANTHER" id="PTHR38436:SF1">
    <property type="entry name" value="ESTER CYCLASE"/>
    <property type="match status" value="1"/>
</dbReference>
<dbReference type="PANTHER" id="PTHR38436">
    <property type="entry name" value="POLYKETIDE CYCLASE SNOAL-LIKE DOMAIN"/>
    <property type="match status" value="1"/>
</dbReference>
<dbReference type="Pfam" id="PF07366">
    <property type="entry name" value="SnoaL"/>
    <property type="match status" value="1"/>
</dbReference>
<dbReference type="SUPFAM" id="SSF54427">
    <property type="entry name" value="NTF2-like"/>
    <property type="match status" value="1"/>
</dbReference>
<feature type="chain" id="PRO_0000425673" description="Aklanonic acid methyl ester cyclase AcmA">
    <location>
        <begin position="1"/>
        <end position="144"/>
    </location>
</feature>
<feature type="binding site">
    <location>
        <position position="51"/>
    </location>
    <ligand>
        <name>substrate</name>
    </ligand>
</feature>
<feature type="binding site">
    <location>
        <position position="105"/>
    </location>
    <ligand>
        <name>substrate</name>
    </ligand>
</feature>
<feature type="mutagenesis site" description="Retains 45% of cyclase activity with a partial loss in stereoselectivity of the final product (20% of C9-S and 80% of C9-R isomers). Retains 20% of cyclase activity with a total loss in stereoselectivity of the final product (racemic mixture of both stereoisomers); when associated with L-51." evidence="2">
    <original>Y</original>
    <variation>F</variation>
    <location>
        <position position="15"/>
    </location>
</feature>
<feature type="mutagenesis site" description="Retains 20% of cyclase activity with a total loss in stereoselectivity of the final product (racemic mixture of both stereoisomers); when associated with F-15." evidence="2">
    <original>N</original>
    <variation>L</variation>
    <location>
        <position position="51"/>
    </location>
</feature>
<feature type="mutagenesis site" description="Retains significant cyclase activity (100% of C9-R isomer)." evidence="2">
    <original>Q</original>
    <variation>A</variation>
    <location>
        <position position="105"/>
    </location>
</feature>
<feature type="mutagenesis site" description="Retains significant cyclase activity (100% of C9-R isomer)." evidence="2">
    <original>H</original>
    <variation>A</variation>
    <location>
        <position position="107"/>
    </location>
</feature>
<feature type="mutagenesis site" description="Loss of cyclase activity." evidence="2">
    <original>D</original>
    <variation>A</variation>
    <location>
        <position position="121"/>
    </location>
</feature>
<feature type="helix" evidence="4">
    <location>
        <begin position="3"/>
        <end position="17"/>
    </location>
</feature>
<feature type="helix" evidence="4">
    <location>
        <begin position="23"/>
        <end position="25"/>
    </location>
</feature>
<feature type="strand" evidence="4">
    <location>
        <begin position="27"/>
        <end position="32"/>
    </location>
</feature>
<feature type="helix" evidence="4">
    <location>
        <begin position="34"/>
        <end position="36"/>
    </location>
</feature>
<feature type="turn" evidence="4">
    <location>
        <begin position="37"/>
        <end position="39"/>
    </location>
</feature>
<feature type="helix" evidence="4">
    <location>
        <begin position="44"/>
        <end position="59"/>
    </location>
</feature>
<feature type="strand" evidence="4">
    <location>
        <begin position="64"/>
        <end position="73"/>
    </location>
</feature>
<feature type="strand" evidence="4">
    <location>
        <begin position="76"/>
        <end position="86"/>
    </location>
</feature>
<feature type="strand" evidence="4">
    <location>
        <begin position="100"/>
        <end position="112"/>
    </location>
</feature>
<feature type="strand" evidence="4">
    <location>
        <begin position="115"/>
        <end position="123"/>
    </location>
</feature>
<feature type="helix" evidence="4">
    <location>
        <begin position="125"/>
        <end position="131"/>
    </location>
</feature>
<gene>
    <name type="primary">acma</name>
    <name type="synonym">aknH</name>
</gene>
<organism>
    <name type="scientific">Streptomyces galilaeus</name>
    <dbReference type="NCBI Taxonomy" id="33899"/>
    <lineage>
        <taxon>Bacteria</taxon>
        <taxon>Bacillati</taxon>
        <taxon>Actinomycetota</taxon>
        <taxon>Actinomycetes</taxon>
        <taxon>Kitasatosporales</taxon>
        <taxon>Streptomycetaceae</taxon>
        <taxon>Streptomyces</taxon>
    </lineage>
</organism>
<keyword id="KW-0002">3D-structure</keyword>
<keyword id="KW-0045">Antibiotic biosynthesis</keyword>
<keyword id="KW-0413">Isomerase</keyword>
<evidence type="ECO:0000269" key="1">
    <source>
    </source>
</evidence>
<evidence type="ECO:0000269" key="2">
    <source>
    </source>
</evidence>
<evidence type="ECO:0000305" key="3"/>
<evidence type="ECO:0007829" key="4">
    <source>
        <dbReference type="PDB" id="2F99"/>
    </source>
</evidence>
<accession>O52646</accession>
<sequence length="144" mass="16731">MSEQIAAVRRMVEAYNTGKTDDVADYIHPEYMNPGTLEFTSLRGPELFAINVAWVKKTFSEEARLEEVGIEERADWVRARLVLYGRHVGEMVGMAPTGRLFSGEQIHLLHFVDGKIHHHRDWPDYQGTYRQLGEPWPETEHRRP</sequence>
<protein>
    <recommendedName>
        <fullName>Aklanonic acid methyl ester cyclase AcmA</fullName>
        <shortName>AAME cyclase</shortName>
        <ecNumber>5.5.1.23</ecNumber>
    </recommendedName>
    <alternativeName>
        <fullName>Methyl aklanonate cyclase</fullName>
    </alternativeName>
</protein>
<proteinExistence type="evidence at protein level"/>
<name>DNRD_STRGJ</name>
<reference key="1">
    <citation type="journal article" date="2000" name="Microbiology">
        <title>Elucidation of anthracyclinone biosynthesis by stepwise cloning of genes for anthracyclines from three different Streptomyces spp.</title>
        <authorList>
            <person name="Kantola J."/>
            <person name="Kunnari T."/>
            <person name="Hautala A."/>
            <person name="Hakala J."/>
            <person name="Ylihonko K."/>
            <person name="Mantsala P."/>
        </authorList>
    </citation>
    <scope>NUCLEOTIDE SEQUENCE [GENOMIC DNA]</scope>
    <scope>FUNCTION</scope>
    <scope>SUBSTRATE SPECIFICITY</scope>
    <source>
        <strain>ATCC 31615</strain>
    </source>
</reference>
<reference key="2">
    <citation type="journal article" date="2002" name="Gene">
        <title>Cloning and characterization of Streptomyces galilaeus aclacinomycins polyketide synthase (PKS) cluster.</title>
        <authorList>
            <person name="Raty K."/>
            <person name="Kantola J."/>
            <person name="Hautala A."/>
            <person name="Hakala J."/>
            <person name="Ylihonko K."/>
            <person name="Mantsala P."/>
        </authorList>
    </citation>
    <scope>NUCLEOTIDE SEQUENCE [GENOMIC DNA]</scope>
    <source>
        <strain>ATCC31615</strain>
    </source>
</reference>
<reference key="3">
    <citation type="journal article" date="2002" name="J. Bacteriol.">
        <title>Expression, purification, and characterization of AknX anthrone oxygenase, which is involved in aklavinone biosynthesis in Streptomyces galilaeus.</title>
        <authorList>
            <person name="Chung J."/>
            <person name="Fujii I."/>
            <person name="Tsukamoto N."/>
            <person name="Sankawa U."/>
            <person name="Ebizuka Y."/>
        </authorList>
    </citation>
    <scope>NUCLEOTIDE SEQUENCE [GENOMIC DNA]</scope>
    <source>
        <strain>3AR-33</strain>
    </source>
</reference>
<reference key="4">
    <citation type="submission" date="2006-08" db="EMBL/GenBank/DDBJ databases">
        <authorList>
            <person name="Niemi J."/>
        </authorList>
    </citation>
    <scope>NUCLEOTIDE SEQUENCE [GENOMIC DNA]</scope>
    <source>
        <strain>ATCC31615</strain>
    </source>
</reference>
<reference key="5">
    <citation type="journal article" date="2006" name="J. Mol. Biol.">
        <title>Crystal structure of the polyketide cyclase AknH with bound substrate and product analogue: implications for catalytic mechanism and product stereoselectivity.</title>
        <authorList>
            <person name="Kallio P."/>
            <person name="Sultana A."/>
            <person name="Niemi J."/>
            <person name="Mantsala P."/>
            <person name="Schneider G."/>
        </authorList>
    </citation>
    <scope>X-RAY CRYSTALLOGRAPHY (2.1 ANGSTROMS) OF 2-144 IN COMPLEX WITH SUBSTRATE ANALOGS</scope>
    <scope>FUNCTION</scope>
    <scope>MUTAGENESIS OF TYR-15; ASN-51; GLN-105; HIS-107 AND ASP-121</scope>
    <scope>BIOPHYSICOCHEMICAL PROPERTIES</scope>
    <scope>SUBSTRATE SPECIFICITY</scope>
    <scope>REACTION MECHANISM</scope>
    <scope>SUBUNIT</scope>
</reference>